<sequence length="1482" mass="163863">MRKDRLLHLCLVLLLILLSASDSNSTEPQYMVLVPSLLHTEAPKKGCVLLSHLNETVTVSASLESGRENRSLFTDLVAEKDLFHCVSFTLPRISASSEVAFLSIQIKGPTQDFRKRNTVLVLNTQSLVFVQTDKPMYKPGQTVRFRVVSVDENFRPRNELIPLIYLENPRRNRIAQWQSLKLEAGINQLSFPLSSEPIQGSYRVVVQTESGGRIQHPFTVEEFVLPKFEVKVQVPKIISIMDEKVNITVCGEYTYGKPVPGLATVSLCRKLSRVLNCDKQEVCEEFSQQLNSNGCITQQVHTKMLQITNTGFEMKLRVEARIREEGTDLEVTANRISEITNIVSKLKFVKVDSHFRQGIPFFAQVLLVDGKGVPIPNKLFFISVNDANYYSNATTNEQGLAQFSINTTSISVNKLFVRVFTVHPNLCFHYSWVAEDHQGAQHTANRVFSLSGSYIHLEPVAGTLPCGHTETITAHYTLNRQAMGELSELSFHYLIMAKGVIVRSGTHTLPVESGDMKGSFALSFPVESDVAPIARMFIFAILPDGEVVGDSEKFEIENCLANKVDLSFSPAQSPPASHAHLQVAAAPQSLCALRAVDQSVLLMKPEAELSVSSVYNLLTVKDLTNFPDNVDQQEEEQGHCPRPFFIHNGAIYVPLSSNEADIYSFLKGMGLKVFTNSKIRKPKSCSVIPSVSAGAVGQGYYGAGLGVVERPYVPQLGTYNVIPLNNEQSSGPVPETVRSYFPETWIWELVAVNSSGVAEVGVTVPDTITEWKAGAFCLSEDAGLGISSTASLRAFQPFFVELTMPYSVIRGEVFTLKATVLNYLPKCIRVSVQLKASPAFLASQNTKGEESYCICGNERQTLSWTVTPKTLGNVNFSVSAEAMQSLELCGNEVVEVPEIKRKDTVIKTLLVEAEGIEQEKTFSSMTCASGANVSEQLSLKLPSNVVKESARASFSVLGDILGSAMQNIQNLLQMPYGCGEQNMVLFAPNIYVLNYLNETQQLTQEIKAKAVGYLITGYQRQLNYKHQDGSYSTFGERYGRNQGNTWLTAFVLKTFAQARSYIFIDEAHITQSLTWLSQMQKDNGCFRSSGSLLNNAIKGGVEDEATLSAYVTIALLEIPLPVTNPIVRNALFCLESAWNVAKEGTHGSHVYTKALLAYAFSLLGKQNQNREILNSLDKEAVKEDNLVHWERPQRPKAPVGHLYQTQAPSAEVEMTSYVLLAYLTAQPAPTSGDLTSATNIVKWIMKQQNAQGGFSSTQDTVVALHALSRYGAATFTRTEKTAQVTVQDSQTFSTNFQVDNNNLLLLQQISLPELPGEYVITVTGERCVYLQTSMKYNILPEKEDSPFALKVQTVPQTCDGHKAHTSFQISLTISYTGNRPASNMVIVDVKMVSGFIPLKPTVKMLERSSSVSRTEVSNNHVLIYVEQVTNQTLSFSFMVLQDIPVGDLKPAIVKVYDYYETDESVVAEYIAPCSTDTEHGNV</sequence>
<protein>
    <recommendedName>
        <fullName>Pregnancy zone protein</fullName>
    </recommendedName>
    <alternativeName>
        <fullName>C3 and PZP-like alpha-2-macroglobulin domain-containing protein 6</fullName>
    </alternativeName>
</protein>
<organism>
    <name type="scientific">Homo sapiens</name>
    <name type="common">Human</name>
    <dbReference type="NCBI Taxonomy" id="9606"/>
    <lineage>
        <taxon>Eukaryota</taxon>
        <taxon>Metazoa</taxon>
        <taxon>Chordata</taxon>
        <taxon>Craniata</taxon>
        <taxon>Vertebrata</taxon>
        <taxon>Euteleostomi</taxon>
        <taxon>Mammalia</taxon>
        <taxon>Eutheria</taxon>
        <taxon>Euarchontoglires</taxon>
        <taxon>Primates</taxon>
        <taxon>Haplorrhini</taxon>
        <taxon>Catarrhini</taxon>
        <taxon>Hominidae</taxon>
        <taxon>Homo</taxon>
    </lineage>
</organism>
<proteinExistence type="evidence at protein level"/>
<reference key="1">
    <citation type="journal article" date="1991" name="Biochim. Biophys. Acta">
        <title>Primary structure of pregnancy zone protein. Molecular cloning of a full-length PZP cDNA clone by the polymerase chain reaction.</title>
        <authorList>
            <person name="Devriendt K."/>
            <person name="van den Berghe H."/>
            <person name="Cassiman J.-J."/>
            <person name="Marynen P."/>
        </authorList>
    </citation>
    <scope>NUCLEOTIDE SEQUENCE [MRNA] (ISOFORM 1)</scope>
    <scope>VARIANT SER-857</scope>
</reference>
<reference key="2">
    <citation type="journal article" date="2006" name="Nature">
        <title>The finished DNA sequence of human chromosome 12.</title>
        <authorList>
            <person name="Scherer S.E."/>
            <person name="Muzny D.M."/>
            <person name="Buhay C.J."/>
            <person name="Chen R."/>
            <person name="Cree A."/>
            <person name="Ding Y."/>
            <person name="Dugan-Rocha S."/>
            <person name="Gill R."/>
            <person name="Gunaratne P."/>
            <person name="Harris R.A."/>
            <person name="Hawes A.C."/>
            <person name="Hernandez J."/>
            <person name="Hodgson A.V."/>
            <person name="Hume J."/>
            <person name="Jackson A."/>
            <person name="Khan Z.M."/>
            <person name="Kovar-Smith C."/>
            <person name="Lewis L.R."/>
            <person name="Lozado R.J."/>
            <person name="Metzker M.L."/>
            <person name="Milosavljevic A."/>
            <person name="Miner G.R."/>
            <person name="Montgomery K.T."/>
            <person name="Morgan M.B."/>
            <person name="Nazareth L.V."/>
            <person name="Scott G."/>
            <person name="Sodergren E."/>
            <person name="Song X.-Z."/>
            <person name="Steffen D."/>
            <person name="Lovering R.C."/>
            <person name="Wheeler D.A."/>
            <person name="Worley K.C."/>
            <person name="Yuan Y."/>
            <person name="Zhang Z."/>
            <person name="Adams C.Q."/>
            <person name="Ansari-Lari M.A."/>
            <person name="Ayele M."/>
            <person name="Brown M.J."/>
            <person name="Chen G."/>
            <person name="Chen Z."/>
            <person name="Clerc-Blankenburg K.P."/>
            <person name="Davis C."/>
            <person name="Delgado O."/>
            <person name="Dinh H.H."/>
            <person name="Draper H."/>
            <person name="Gonzalez-Garay M.L."/>
            <person name="Havlak P."/>
            <person name="Jackson L.R."/>
            <person name="Jacob L.S."/>
            <person name="Kelly S.H."/>
            <person name="Li L."/>
            <person name="Li Z."/>
            <person name="Liu J."/>
            <person name="Liu W."/>
            <person name="Lu J."/>
            <person name="Maheshwari M."/>
            <person name="Nguyen B.-V."/>
            <person name="Okwuonu G.O."/>
            <person name="Pasternak S."/>
            <person name="Perez L.M."/>
            <person name="Plopper F.J.H."/>
            <person name="Santibanez J."/>
            <person name="Shen H."/>
            <person name="Tabor P.E."/>
            <person name="Verduzco D."/>
            <person name="Waldron L."/>
            <person name="Wang Q."/>
            <person name="Williams G.A."/>
            <person name="Zhang J."/>
            <person name="Zhou J."/>
            <person name="Allen C.C."/>
            <person name="Amin A.G."/>
            <person name="Anyalebechi V."/>
            <person name="Bailey M."/>
            <person name="Barbaria J.A."/>
            <person name="Bimage K.E."/>
            <person name="Bryant N.P."/>
            <person name="Burch P.E."/>
            <person name="Burkett C.E."/>
            <person name="Burrell K.L."/>
            <person name="Calderon E."/>
            <person name="Cardenas V."/>
            <person name="Carter K."/>
            <person name="Casias K."/>
            <person name="Cavazos I."/>
            <person name="Cavazos S.R."/>
            <person name="Ceasar H."/>
            <person name="Chacko J."/>
            <person name="Chan S.N."/>
            <person name="Chavez D."/>
            <person name="Christopoulos C."/>
            <person name="Chu J."/>
            <person name="Cockrell R."/>
            <person name="Cox C.D."/>
            <person name="Dang M."/>
            <person name="Dathorne S.R."/>
            <person name="David R."/>
            <person name="Davis C.M."/>
            <person name="Davy-Carroll L."/>
            <person name="Deshazo D.R."/>
            <person name="Donlin J.E."/>
            <person name="D'Souza L."/>
            <person name="Eaves K.A."/>
            <person name="Egan A."/>
            <person name="Emery-Cohen A.J."/>
            <person name="Escotto M."/>
            <person name="Flagg N."/>
            <person name="Forbes L.D."/>
            <person name="Gabisi A.M."/>
            <person name="Garza M."/>
            <person name="Hamilton C."/>
            <person name="Henderson N."/>
            <person name="Hernandez O."/>
            <person name="Hines S."/>
            <person name="Hogues M.E."/>
            <person name="Huang M."/>
            <person name="Idlebird D.G."/>
            <person name="Johnson R."/>
            <person name="Jolivet A."/>
            <person name="Jones S."/>
            <person name="Kagan R."/>
            <person name="King L.M."/>
            <person name="Leal B."/>
            <person name="Lebow H."/>
            <person name="Lee S."/>
            <person name="LeVan J.M."/>
            <person name="Lewis L.C."/>
            <person name="London P."/>
            <person name="Lorensuhewa L.M."/>
            <person name="Loulseged H."/>
            <person name="Lovett D.A."/>
            <person name="Lucier A."/>
            <person name="Lucier R.L."/>
            <person name="Ma J."/>
            <person name="Madu R.C."/>
            <person name="Mapua P."/>
            <person name="Martindale A.D."/>
            <person name="Martinez E."/>
            <person name="Massey E."/>
            <person name="Mawhiney S."/>
            <person name="Meador M.G."/>
            <person name="Mendez S."/>
            <person name="Mercado C."/>
            <person name="Mercado I.C."/>
            <person name="Merritt C.E."/>
            <person name="Miner Z.L."/>
            <person name="Minja E."/>
            <person name="Mitchell T."/>
            <person name="Mohabbat F."/>
            <person name="Mohabbat K."/>
            <person name="Montgomery B."/>
            <person name="Moore N."/>
            <person name="Morris S."/>
            <person name="Munidasa M."/>
            <person name="Ngo R.N."/>
            <person name="Nguyen N.B."/>
            <person name="Nickerson E."/>
            <person name="Nwaokelemeh O.O."/>
            <person name="Nwokenkwo S."/>
            <person name="Obregon M."/>
            <person name="Oguh M."/>
            <person name="Oragunye N."/>
            <person name="Oviedo R.J."/>
            <person name="Parish B.J."/>
            <person name="Parker D.N."/>
            <person name="Parrish J."/>
            <person name="Parks K.L."/>
            <person name="Paul H.A."/>
            <person name="Payton B.A."/>
            <person name="Perez A."/>
            <person name="Perrin W."/>
            <person name="Pickens A."/>
            <person name="Primus E.L."/>
            <person name="Pu L.-L."/>
            <person name="Puazo M."/>
            <person name="Quiles M.M."/>
            <person name="Quiroz J.B."/>
            <person name="Rabata D."/>
            <person name="Reeves K."/>
            <person name="Ruiz S.J."/>
            <person name="Shao H."/>
            <person name="Sisson I."/>
            <person name="Sonaike T."/>
            <person name="Sorelle R.P."/>
            <person name="Sutton A.E."/>
            <person name="Svatek A.F."/>
            <person name="Svetz L.A."/>
            <person name="Tamerisa K.S."/>
            <person name="Taylor T.R."/>
            <person name="Teague B."/>
            <person name="Thomas N."/>
            <person name="Thorn R.D."/>
            <person name="Trejos Z.Y."/>
            <person name="Trevino B.K."/>
            <person name="Ukegbu O.N."/>
            <person name="Urban J.B."/>
            <person name="Vasquez L.I."/>
            <person name="Vera V.A."/>
            <person name="Villasana D.M."/>
            <person name="Wang L."/>
            <person name="Ward-Moore S."/>
            <person name="Warren J.T."/>
            <person name="Wei X."/>
            <person name="White F."/>
            <person name="Williamson A.L."/>
            <person name="Wleczyk R."/>
            <person name="Wooden H.S."/>
            <person name="Wooden S.H."/>
            <person name="Yen J."/>
            <person name="Yoon L."/>
            <person name="Yoon V."/>
            <person name="Zorrilla S.E."/>
            <person name="Nelson D."/>
            <person name="Kucherlapati R."/>
            <person name="Weinstock G."/>
            <person name="Gibbs R.A."/>
        </authorList>
    </citation>
    <scope>NUCLEOTIDE SEQUENCE [LARGE SCALE GENOMIC DNA]</scope>
</reference>
<reference key="3">
    <citation type="journal article" date="2004" name="Genome Res.">
        <title>The status, quality, and expansion of the NIH full-length cDNA project: the Mammalian Gene Collection (MGC).</title>
        <authorList>
            <consortium name="The MGC Project Team"/>
        </authorList>
    </citation>
    <scope>NUCLEOTIDE SEQUENCE [LARGE SCALE MRNA] (ISOFORM 2)</scope>
    <scope>VARIANT PRO-1205</scope>
</reference>
<reference key="4">
    <citation type="journal article" date="1993" name="Arch. Biochem. Biophys.">
        <title>Alpha-macroglobulin domain structure studied by specific limited proteolysis.</title>
        <authorList>
            <person name="Thomsen N.K."/>
            <person name="Sottrup-Jensen L."/>
        </authorList>
    </citation>
    <scope>PROTEIN SEQUENCE OF 26-37; 222-230; 720-733; 896-902; 1003-1008; 1056-1061; 1184-1193; 1197-1224; 1277-1286 AND 1336-1344 (ISOFORM 1)</scope>
</reference>
<reference key="5">
    <citation type="journal article" date="1990" name="FEBS Lett.">
        <title>A genetic polymorphism in a functional domain of human pregnancy zone protein: the bait region. Genomic structure of the bait domains of human pregnancy zone protein and alpha 2 macroglobulin.</title>
        <authorList>
            <person name="Marynen P."/>
            <person name="Devriendt K."/>
            <person name="van den Berghe H."/>
            <person name="Cassiman J.-J."/>
        </authorList>
    </citation>
    <scope>NUCLEOTIDE SEQUENCE [GENOMIC DNA] OF 668-753</scope>
    <scope>VARIANT MET-691</scope>
    <source>
        <tissue>Placenta</tissue>
    </source>
</reference>
<reference key="6">
    <citation type="journal article" date="1989" name="J. Biol. Chem.">
        <title>The alpha-macroglobulin bait region. Sequence diversity and localization of cleavage sites for proteinases in five mammalian alpha-macroglobulins.</title>
        <authorList>
            <person name="Sottrup-Jensen L."/>
            <person name="Sand O."/>
            <person name="Kristensen L."/>
            <person name="Fey G.H."/>
        </authorList>
    </citation>
    <scope>PROTEIN SEQUENCE OF 670-759</scope>
</reference>
<reference key="7">
    <citation type="journal article" date="1985" name="J. Biol. Chem.">
        <title>Characterization of human pregnancy zone protein. Comparison with human alpha 2-macroglobulin.</title>
        <authorList>
            <person name="Sand O."/>
            <person name="Folkersen J."/>
            <person name="Westergaard J.G."/>
            <person name="Sottrup-Jensen L."/>
        </authorList>
    </citation>
    <scope>PROTEIN SEQUENCE OF 974-983</scope>
</reference>
<reference key="8">
    <citation type="journal article" date="1989" name="Gene">
        <title>A cluster of alpha 2-macroglobulin-related genes (alpha 2 M) on human chromosome 12p: cloning of the pregnancy-zone protein gene and an alpha 2M pseudogene.</title>
        <authorList>
            <person name="Devriendt K."/>
            <person name="Zhang J."/>
            <person name="van Leuven F."/>
            <person name="van den Berghe H."/>
            <person name="Cassiman J.-J."/>
            <person name="Marynen P."/>
        </authorList>
    </citation>
    <scope>NUCLEOTIDE SEQUENCE [GENOMIC DNA] OF 1259-1461</scope>
</reference>
<reference key="9">
    <citation type="journal article" date="1989" name="Biochemistry">
        <title>Pregnancy zone protein, a proteinase-binding macroglobulin. Interactions with proteinases and methylamine.</title>
        <authorList>
            <person name="Christensen U."/>
            <person name="Simonsen M."/>
            <person name="Harrit N."/>
            <person name="Sottrup-Jensen L."/>
        </authorList>
    </citation>
    <scope>INTERACTION WITH PROTEINASES AND METHYLAMINE</scope>
</reference>
<reference key="10">
    <citation type="journal article" date="2005" name="J. Proteome Res.">
        <title>Human plasma N-glycoproteome analysis by immunoaffinity subtraction, hydrazide chemistry, and mass spectrometry.</title>
        <authorList>
            <person name="Liu T."/>
            <person name="Qian W.-J."/>
            <person name="Gritsenko M.A."/>
            <person name="Camp D.G. II"/>
            <person name="Monroe M.E."/>
            <person name="Moore R.J."/>
            <person name="Smith R.D."/>
        </authorList>
    </citation>
    <scope>GLYCOSYLATION [LARGE SCALE ANALYSIS] AT ASN-406; ASN-932; ASN-997 AND ASN-1430</scope>
    <source>
        <tissue>Plasma</tissue>
    </source>
</reference>
<reference key="11">
    <citation type="journal article" date="2009" name="J. Proteome Res.">
        <title>Glycoproteomics analysis of human liver tissue by combination of multiple enzyme digestion and hydrazide chemistry.</title>
        <authorList>
            <person name="Chen R."/>
            <person name="Jiang X."/>
            <person name="Sun D."/>
            <person name="Han G."/>
            <person name="Wang F."/>
            <person name="Ye M."/>
            <person name="Wang L."/>
            <person name="Zou H."/>
        </authorList>
    </citation>
    <scope>GLYCOSYLATION [LARGE SCALE ANALYSIS] AT ASN-997</scope>
    <source>
        <tissue>Liver</tissue>
    </source>
</reference>
<reference key="12">
    <citation type="journal article" date="2011" name="BMC Syst. Biol.">
        <title>Initial characterization of the human central proteome.</title>
        <authorList>
            <person name="Burkard T.R."/>
            <person name="Planyavsky M."/>
            <person name="Kaupe I."/>
            <person name="Breitwieser F.P."/>
            <person name="Buerckstuemmer T."/>
            <person name="Bennett K.L."/>
            <person name="Superti-Furga G."/>
            <person name="Colinge J."/>
        </authorList>
    </citation>
    <scope>IDENTIFICATION BY MASS SPECTROMETRY [LARGE SCALE ANALYSIS]</scope>
</reference>
<reference key="13">
    <citation type="journal article" date="2006" name="Science">
        <title>The consensus coding sequences of human breast and colorectal cancers.</title>
        <authorList>
            <person name="Sjoeblom T."/>
            <person name="Jones S."/>
            <person name="Wood L.D."/>
            <person name="Parsons D.W."/>
            <person name="Lin J."/>
            <person name="Barber T.D."/>
            <person name="Mandelker D."/>
            <person name="Leary R.J."/>
            <person name="Ptak J."/>
            <person name="Silliman N."/>
            <person name="Szabo S."/>
            <person name="Buckhaults P."/>
            <person name="Farrell C."/>
            <person name="Meeh P."/>
            <person name="Markowitz S.D."/>
            <person name="Willis J."/>
            <person name="Dawson D."/>
            <person name="Willson J.K.V."/>
            <person name="Gazdar A.F."/>
            <person name="Hartigan J."/>
            <person name="Wu L."/>
            <person name="Liu C."/>
            <person name="Parmigiani G."/>
            <person name="Park B.H."/>
            <person name="Bachman K.E."/>
            <person name="Papadopoulos N."/>
            <person name="Vogelstein B."/>
            <person name="Kinzler K.W."/>
            <person name="Velculescu V.E."/>
        </authorList>
    </citation>
    <scope>VARIANT [LARGE SCALE ANALYSIS] HIS-1128</scope>
</reference>
<accession>P20742</accession>
<accession>A6ND27</accession>
<accession>Q15273</accession>
<accession>Q2NKL2</accession>
<accession>Q7M4N7</accession>
<keyword id="KW-0025">Alternative splicing</keyword>
<keyword id="KW-0082">Bait region</keyword>
<keyword id="KW-0903">Direct protein sequencing</keyword>
<keyword id="KW-1015">Disulfide bond</keyword>
<keyword id="KW-0325">Glycoprotein</keyword>
<keyword id="KW-0646">Protease inhibitor</keyword>
<keyword id="KW-1267">Proteomics identification</keyword>
<keyword id="KW-1185">Reference proteome</keyword>
<keyword id="KW-0964">Secreted</keyword>
<keyword id="KW-0722">Serine protease inhibitor</keyword>
<keyword id="KW-0732">Signal</keyword>
<keyword id="KW-0882">Thioester bond</keyword>
<feature type="signal peptide">
    <location>
        <begin position="1"/>
        <end position="25"/>
    </location>
</feature>
<feature type="chain" id="PRO_0000000063" description="Pregnancy zone protein">
    <location>
        <begin position="26"/>
        <end position="1482"/>
    </location>
</feature>
<feature type="region of interest" description="Bait region">
    <location>
        <begin position="685"/>
        <end position="735"/>
    </location>
</feature>
<feature type="glycosylation site" description="N-linked (GlcNAc...) asparagine" evidence="1">
    <location>
        <position position="54"/>
    </location>
</feature>
<feature type="glycosylation site" description="N-linked (GlcNAc...) asparagine" evidence="1">
    <location>
        <position position="69"/>
    </location>
</feature>
<feature type="glycosylation site" description="N-linked (GlcNAc...) asparagine" evidence="1">
    <location>
        <position position="246"/>
    </location>
</feature>
<feature type="glycosylation site" description="N-linked (GlcNAc...) asparagine" evidence="1">
    <location>
        <position position="392"/>
    </location>
</feature>
<feature type="glycosylation site" description="N-linked (GlcNAc...) asparagine" evidence="3">
    <location>
        <position position="406"/>
    </location>
</feature>
<feature type="glycosylation site" description="N-linked (GlcNAc...) asparagine" evidence="1">
    <location>
        <position position="753"/>
    </location>
</feature>
<feature type="glycosylation site" description="N-linked (GlcNAc...) asparagine" evidence="1">
    <location>
        <position position="875"/>
    </location>
</feature>
<feature type="glycosylation site" description="N-linked (GlcNAc...) asparagine" evidence="3">
    <location>
        <position position="932"/>
    </location>
</feature>
<feature type="glycosylation site" description="N-linked (GlcNAc...) asparagine" evidence="3 6">
    <location>
        <position position="997"/>
    </location>
</feature>
<feature type="glycosylation site" description="N-linked (GlcNAc...) asparagine" evidence="3">
    <location>
        <position position="1430"/>
    </location>
</feature>
<feature type="cross-link" description="Isoglutamyl cysteine thioester (Cys-Gln)">
    <location>
        <begin position="978"/>
        <end position="981"/>
    </location>
</feature>
<feature type="splice variant" id="VSP_030862" description="In isoform 2." evidence="8">
    <location>
        <begin position="1"/>
        <end position="131"/>
    </location>
</feature>
<feature type="splice variant" id="VSP_030863" description="In isoform 2." evidence="8">
    <original>TDKPMYKPGQT</original>
    <variation>MSESYRRTTFP</variation>
    <location>
        <begin position="132"/>
        <end position="142"/>
    </location>
</feature>
<feature type="splice variant" id="VSP_030864" description="In isoform 2." evidence="8">
    <location>
        <begin position="830"/>
        <end position="912"/>
    </location>
</feature>
<feature type="sequence variant" id="VAR_034429" description="In dbSNP:rs12230214.">
    <original>L</original>
    <variation>V</variation>
    <location>
        <position position="379"/>
    </location>
</feature>
<feature type="sequence variant" id="VAR_021845" description="In dbSNP:rs3213832." evidence="4">
    <original>V</original>
    <variation>M</variation>
    <location>
        <position position="691"/>
    </location>
</feature>
<feature type="sequence variant" id="VAR_020005" description="In dbSNP:rs2277413.">
    <original>V</original>
    <variation>A</variation>
    <location>
        <position position="813"/>
    </location>
</feature>
<feature type="sequence variant" id="VAR_060733" description="In dbSNP:rs3213831." evidence="7">
    <original>N</original>
    <variation>S</variation>
    <location>
        <position position="857"/>
    </location>
</feature>
<feature type="sequence variant" id="VAR_060982" description="In dbSNP:rs57006764.">
    <original>T</original>
    <variation>M</variation>
    <location>
        <position position="1003"/>
    </location>
</feature>
<feature type="sequence variant" id="VAR_036235" description="In a colorectal cancer sample; somatic mutation; dbSNP:rs200477595." evidence="5">
    <original>R</original>
    <variation>H</variation>
    <location>
        <position position="1128"/>
    </location>
</feature>
<feature type="sequence variant" id="VAR_060734" description="In dbSNP:rs2377741." evidence="2">
    <original>T</original>
    <variation>P</variation>
    <location>
        <position position="1205"/>
    </location>
</feature>
<feature type="sequence variant" id="VAR_024358" description="In dbSNP:rs10842971.">
    <original>I</original>
    <variation>N</variation>
    <location>
        <position position="1443"/>
    </location>
</feature>
<feature type="sequence conflict" description="In Ref. 6; AA sequence." evidence="9" ref="6">
    <original>N</original>
    <variation>Q</variation>
    <location>
        <position position="753"/>
    </location>
</feature>
<gene>
    <name type="primary">PZP</name>
    <name type="synonym">CPAMD6</name>
</gene>
<name>PZP_HUMAN</name>
<evidence type="ECO:0000255" key="1"/>
<evidence type="ECO:0000269" key="2">
    <source>
    </source>
</evidence>
<evidence type="ECO:0000269" key="3">
    <source>
    </source>
</evidence>
<evidence type="ECO:0000269" key="4">
    <source>
    </source>
</evidence>
<evidence type="ECO:0000269" key="5">
    <source>
    </source>
</evidence>
<evidence type="ECO:0000269" key="6">
    <source>
    </source>
</evidence>
<evidence type="ECO:0000269" key="7">
    <source>
    </source>
</evidence>
<evidence type="ECO:0000303" key="8">
    <source>
    </source>
</evidence>
<evidence type="ECO:0000305" key="9"/>
<dbReference type="EMBL" id="X54380">
    <property type="protein sequence ID" value="CAA38255.1"/>
    <property type="molecule type" value="mRNA"/>
</dbReference>
<dbReference type="EMBL" id="AC010175">
    <property type="status" value="NOT_ANNOTATED_CDS"/>
    <property type="molecule type" value="Genomic_DNA"/>
</dbReference>
<dbReference type="EMBL" id="BC111756">
    <property type="protein sequence ID" value="AAI11757.1"/>
    <property type="molecule type" value="mRNA"/>
</dbReference>
<dbReference type="EMBL" id="X51541">
    <property type="protein sequence ID" value="CAA35919.1"/>
    <property type="molecule type" value="Genomic_DNA"/>
</dbReference>
<dbReference type="EMBL" id="M24416">
    <property type="protein sequence ID" value="AAA60234.1"/>
    <property type="molecule type" value="Genomic_DNA"/>
</dbReference>
<dbReference type="CCDS" id="CCDS8600.1">
    <molecule id="P20742-1"/>
</dbReference>
<dbReference type="PIR" id="S13495">
    <property type="entry name" value="S13495"/>
</dbReference>
<dbReference type="PIR" id="S29738">
    <property type="entry name" value="S29738"/>
</dbReference>
<dbReference type="RefSeq" id="NP_002855.2">
    <molecule id="P20742-1"/>
    <property type="nucleotide sequence ID" value="NM_002864.3"/>
</dbReference>
<dbReference type="RefSeq" id="XP_024304879.1">
    <molecule id="P20742-2"/>
    <property type="nucleotide sequence ID" value="XM_024449111.1"/>
</dbReference>
<dbReference type="SMR" id="P20742"/>
<dbReference type="BioGRID" id="111796">
    <property type="interactions" value="16"/>
</dbReference>
<dbReference type="FunCoup" id="P20742">
    <property type="interactions" value="129"/>
</dbReference>
<dbReference type="IntAct" id="P20742">
    <property type="interactions" value="11"/>
</dbReference>
<dbReference type="STRING" id="9606.ENSP00000261336"/>
<dbReference type="DrugBank" id="DB01593">
    <property type="generic name" value="Zinc"/>
</dbReference>
<dbReference type="DrugBank" id="DB14487">
    <property type="generic name" value="Zinc acetate"/>
</dbReference>
<dbReference type="DrugBank" id="DB14533">
    <property type="generic name" value="Zinc chloride"/>
</dbReference>
<dbReference type="DrugBank" id="DB14548">
    <property type="generic name" value="Zinc sulfate, unspecified form"/>
</dbReference>
<dbReference type="MEROPS" id="I39.003"/>
<dbReference type="GlyConnect" id="1623">
    <property type="glycosylation" value="4 N-Linked glycans (2 sites)"/>
</dbReference>
<dbReference type="GlyCosmos" id="P20742">
    <property type="glycosylation" value="10 sites, 4 glycans"/>
</dbReference>
<dbReference type="GlyGen" id="P20742">
    <property type="glycosylation" value="11 sites, 8 N-linked glycans (2 sites)"/>
</dbReference>
<dbReference type="iPTMnet" id="P20742"/>
<dbReference type="PhosphoSitePlus" id="P20742"/>
<dbReference type="BioMuta" id="PZP"/>
<dbReference type="DMDM" id="281185515"/>
<dbReference type="CPTAC" id="non-CPTAC-2688"/>
<dbReference type="CPTAC" id="non-CPTAC-2689"/>
<dbReference type="jPOST" id="P20742"/>
<dbReference type="MassIVE" id="P20742"/>
<dbReference type="PaxDb" id="9606-ENSP00000261336"/>
<dbReference type="PeptideAtlas" id="P20742"/>
<dbReference type="PRIDE" id="P20742"/>
<dbReference type="ProteomicsDB" id="53781">
    <molecule id="P20742-1"/>
</dbReference>
<dbReference type="ProteomicsDB" id="53782">
    <molecule id="P20742-2"/>
</dbReference>
<dbReference type="Antibodypedia" id="42093">
    <property type="antibodies" value="146 antibodies from 22 providers"/>
</dbReference>
<dbReference type="Ensembl" id="ENST00000261336.7">
    <molecule id="P20742-1"/>
    <property type="protein sequence ID" value="ENSP00000261336.2"/>
    <property type="gene ID" value="ENSG00000126838.10"/>
</dbReference>
<dbReference type="GeneID" id="5858"/>
<dbReference type="KEGG" id="hsa:5858"/>
<dbReference type="MANE-Select" id="ENST00000261336.7">
    <property type="protein sequence ID" value="ENSP00000261336.2"/>
    <property type="RefSeq nucleotide sequence ID" value="NM_002864.3"/>
    <property type="RefSeq protein sequence ID" value="NP_002855.2"/>
</dbReference>
<dbReference type="UCSC" id="uc001qvl.3">
    <molecule id="P20742-1"/>
    <property type="organism name" value="human"/>
</dbReference>
<dbReference type="AGR" id="HGNC:9750"/>
<dbReference type="GeneCards" id="PZP"/>
<dbReference type="HGNC" id="HGNC:9750">
    <property type="gene designation" value="PZP"/>
</dbReference>
<dbReference type="HPA" id="ENSG00000126838">
    <property type="expression patterns" value="Tissue enriched (liver)"/>
</dbReference>
<dbReference type="MalaCards" id="PZP"/>
<dbReference type="MIM" id="176420">
    <property type="type" value="gene"/>
</dbReference>
<dbReference type="neXtProt" id="NX_P20742"/>
<dbReference type="OpenTargets" id="ENSG00000126838"/>
<dbReference type="VEuPathDB" id="HostDB:ENSG00000126838"/>
<dbReference type="eggNOG" id="KOG1366">
    <property type="taxonomic scope" value="Eukaryota"/>
</dbReference>
<dbReference type="GeneTree" id="ENSGT00940000163609"/>
<dbReference type="HOGENOM" id="CLU_001634_0_1_1"/>
<dbReference type="InParanoid" id="P20742"/>
<dbReference type="OMA" id="CVKGVPV"/>
<dbReference type="OrthoDB" id="9998011at2759"/>
<dbReference type="PAN-GO" id="P20742">
    <property type="GO annotations" value="2 GO annotations based on evolutionary models"/>
</dbReference>
<dbReference type="PhylomeDB" id="P20742"/>
<dbReference type="TreeFam" id="TF313285"/>
<dbReference type="PathwayCommons" id="P20742"/>
<dbReference type="SignaLink" id="P20742"/>
<dbReference type="SIGNOR" id="P20742"/>
<dbReference type="Pharos" id="P20742">
    <property type="development level" value="Tbio"/>
</dbReference>
<dbReference type="PRO" id="PR:P20742"/>
<dbReference type="Proteomes" id="UP000005640">
    <property type="component" value="Chromosome 12"/>
</dbReference>
<dbReference type="RNAct" id="P20742">
    <property type="molecule type" value="protein"/>
</dbReference>
<dbReference type="Bgee" id="ENSG00000126838">
    <property type="expression patterns" value="Expressed in bronchial epithelial cell and 129 other cell types or tissues"/>
</dbReference>
<dbReference type="ExpressionAtlas" id="P20742">
    <property type="expression patterns" value="baseline and differential"/>
</dbReference>
<dbReference type="GO" id="GO:0072562">
    <property type="term" value="C:blood microparticle"/>
    <property type="evidence" value="ECO:0007005"/>
    <property type="project" value="UniProtKB"/>
</dbReference>
<dbReference type="GO" id="GO:0070062">
    <property type="term" value="C:extracellular exosome"/>
    <property type="evidence" value="ECO:0007005"/>
    <property type="project" value="UniProtKB"/>
</dbReference>
<dbReference type="GO" id="GO:0005576">
    <property type="term" value="C:extracellular region"/>
    <property type="evidence" value="ECO:0000303"/>
    <property type="project" value="UniProtKB"/>
</dbReference>
<dbReference type="GO" id="GO:0005615">
    <property type="term" value="C:extracellular space"/>
    <property type="evidence" value="ECO:0000318"/>
    <property type="project" value="GO_Central"/>
</dbReference>
<dbReference type="GO" id="GO:0004866">
    <property type="term" value="F:endopeptidase inhibitor activity"/>
    <property type="evidence" value="ECO:0000318"/>
    <property type="project" value="GO_Central"/>
</dbReference>
<dbReference type="GO" id="GO:0002020">
    <property type="term" value="F:protease binding"/>
    <property type="evidence" value="ECO:0000318"/>
    <property type="project" value="GO_Central"/>
</dbReference>
<dbReference type="GO" id="GO:0004867">
    <property type="term" value="F:serine-type endopeptidase inhibitor activity"/>
    <property type="evidence" value="ECO:0007669"/>
    <property type="project" value="UniProtKB-KW"/>
</dbReference>
<dbReference type="GO" id="GO:0007565">
    <property type="term" value="P:female pregnancy"/>
    <property type="evidence" value="ECO:0000304"/>
    <property type="project" value="UniProtKB"/>
</dbReference>
<dbReference type="CDD" id="cd02897">
    <property type="entry name" value="A2M_2"/>
    <property type="match status" value="1"/>
</dbReference>
<dbReference type="FunFam" id="2.60.40.1940:FF:000002">
    <property type="entry name" value="Alpha-2-macroglobulin"/>
    <property type="match status" value="1"/>
</dbReference>
<dbReference type="FunFam" id="2.60.40.10:FF:000312">
    <property type="entry name" value="Alpha-2-macroglobulin like 1"/>
    <property type="match status" value="1"/>
</dbReference>
<dbReference type="FunFam" id="1.50.10.20:FF:000001">
    <property type="entry name" value="CD109 isoform 1"/>
    <property type="match status" value="1"/>
</dbReference>
<dbReference type="FunFam" id="2.60.40.1930:FF:000001">
    <property type="entry name" value="CD109 isoform 3"/>
    <property type="match status" value="1"/>
</dbReference>
<dbReference type="FunFam" id="2.20.130.20:FF:000004">
    <property type="entry name" value="PZP, alpha-2-macroglobulin like"/>
    <property type="match status" value="1"/>
</dbReference>
<dbReference type="FunFam" id="2.60.40.10:FF:000952">
    <property type="entry name" value="PZP, alpha-2-macroglobulin like"/>
    <property type="match status" value="1"/>
</dbReference>
<dbReference type="FunFam" id="2.60.40.1930:FF:000002">
    <property type="entry name" value="PZP, alpha-2-macroglobulin like"/>
    <property type="match status" value="1"/>
</dbReference>
<dbReference type="FunFam" id="2.60.40.690:FF:000001">
    <property type="entry name" value="PZP, alpha-2-macroglobulin like"/>
    <property type="match status" value="1"/>
</dbReference>
<dbReference type="Gene3D" id="1.50.10.20">
    <property type="match status" value="1"/>
</dbReference>
<dbReference type="Gene3D" id="2.20.130.20">
    <property type="match status" value="1"/>
</dbReference>
<dbReference type="Gene3D" id="2.60.120.1540">
    <property type="match status" value="1"/>
</dbReference>
<dbReference type="Gene3D" id="2.60.40.1930">
    <property type="match status" value="2"/>
</dbReference>
<dbReference type="Gene3D" id="2.60.40.1940">
    <property type="match status" value="1"/>
</dbReference>
<dbReference type="Gene3D" id="2.60.40.690">
    <property type="entry name" value="Alpha-macroglobulin, receptor-binding domain"/>
    <property type="match status" value="1"/>
</dbReference>
<dbReference type="Gene3D" id="2.60.40.10">
    <property type="entry name" value="Immunoglobulins"/>
    <property type="match status" value="2"/>
</dbReference>
<dbReference type="InterPro" id="IPR009048">
    <property type="entry name" value="A-macroglobulin_rcpt-bd"/>
</dbReference>
<dbReference type="InterPro" id="IPR036595">
    <property type="entry name" value="A-macroglobulin_rcpt-bd_sf"/>
</dbReference>
<dbReference type="InterPro" id="IPR050473">
    <property type="entry name" value="A2M/Complement_sys"/>
</dbReference>
<dbReference type="InterPro" id="IPR011625">
    <property type="entry name" value="A2M_N_BRD"/>
</dbReference>
<dbReference type="InterPro" id="IPR041813">
    <property type="entry name" value="A2M_TED"/>
</dbReference>
<dbReference type="InterPro" id="IPR047565">
    <property type="entry name" value="Alpha-macroglob_thiol-ester_cl"/>
</dbReference>
<dbReference type="InterPro" id="IPR011626">
    <property type="entry name" value="Alpha-macroglobulin_TED"/>
</dbReference>
<dbReference type="InterPro" id="IPR013783">
    <property type="entry name" value="Ig-like_fold"/>
</dbReference>
<dbReference type="InterPro" id="IPR014756">
    <property type="entry name" value="Ig_E-set"/>
</dbReference>
<dbReference type="InterPro" id="IPR001599">
    <property type="entry name" value="Macroglobln_a2"/>
</dbReference>
<dbReference type="InterPro" id="IPR019742">
    <property type="entry name" value="MacrogloblnA2_CS"/>
</dbReference>
<dbReference type="InterPro" id="IPR002890">
    <property type="entry name" value="MG2"/>
</dbReference>
<dbReference type="InterPro" id="IPR041555">
    <property type="entry name" value="MG3"/>
</dbReference>
<dbReference type="InterPro" id="IPR040839">
    <property type="entry name" value="MG4"/>
</dbReference>
<dbReference type="InterPro" id="IPR008930">
    <property type="entry name" value="Terpenoid_cyclase/PrenylTrfase"/>
</dbReference>
<dbReference type="InterPro" id="IPR010916">
    <property type="entry name" value="TonB_box_CS"/>
</dbReference>
<dbReference type="PANTHER" id="PTHR11412">
    <property type="entry name" value="MACROGLOBULIN / COMPLEMENT"/>
    <property type="match status" value="1"/>
</dbReference>
<dbReference type="PANTHER" id="PTHR11412:SF92">
    <property type="entry name" value="PREGNANCY ZONE PROTEIN"/>
    <property type="match status" value="1"/>
</dbReference>
<dbReference type="Pfam" id="PF00207">
    <property type="entry name" value="A2M"/>
    <property type="match status" value="1"/>
</dbReference>
<dbReference type="Pfam" id="PF07703">
    <property type="entry name" value="A2M_BRD"/>
    <property type="match status" value="1"/>
</dbReference>
<dbReference type="Pfam" id="PF07677">
    <property type="entry name" value="A2M_recep"/>
    <property type="match status" value="1"/>
</dbReference>
<dbReference type="Pfam" id="PF01835">
    <property type="entry name" value="MG2"/>
    <property type="match status" value="1"/>
</dbReference>
<dbReference type="Pfam" id="PF17791">
    <property type="entry name" value="MG3"/>
    <property type="match status" value="1"/>
</dbReference>
<dbReference type="Pfam" id="PF17789">
    <property type="entry name" value="MG4"/>
    <property type="match status" value="1"/>
</dbReference>
<dbReference type="Pfam" id="PF07678">
    <property type="entry name" value="TED_complement"/>
    <property type="match status" value="1"/>
</dbReference>
<dbReference type="SMART" id="SM01360">
    <property type="entry name" value="A2M"/>
    <property type="match status" value="1"/>
</dbReference>
<dbReference type="SMART" id="SM01359">
    <property type="entry name" value="A2M_N_2"/>
    <property type="match status" value="1"/>
</dbReference>
<dbReference type="SMART" id="SM01361">
    <property type="entry name" value="A2M_recep"/>
    <property type="match status" value="1"/>
</dbReference>
<dbReference type="SMART" id="SM01419">
    <property type="entry name" value="Thiol-ester_cl"/>
    <property type="match status" value="1"/>
</dbReference>
<dbReference type="SUPFAM" id="SSF49410">
    <property type="entry name" value="Alpha-macroglobulin receptor domain"/>
    <property type="match status" value="1"/>
</dbReference>
<dbReference type="SUPFAM" id="SSF81296">
    <property type="entry name" value="E set domains"/>
    <property type="match status" value="1"/>
</dbReference>
<dbReference type="SUPFAM" id="SSF48239">
    <property type="entry name" value="Terpenoid cyclases/Protein prenyltransferases"/>
    <property type="match status" value="1"/>
</dbReference>
<dbReference type="PROSITE" id="PS00477">
    <property type="entry name" value="ALPHA_2_MACROGLOBULIN"/>
    <property type="match status" value="1"/>
</dbReference>
<comment type="function">
    <text>Is able to inhibit all four classes of proteinases by a unique 'trapping' mechanism. This protein has a peptide stretch, called the 'bait region' which contains specific cleavage sites for different proteinases. When a proteinase cleaves the bait region, a conformational change is induced in the protein which traps the proteinase. The entrapped enzyme remains active against low molecular weight substrates (activity against high molecular weight substrates is greatly reduced). Following cleavage in the bait region a thioester bond is hydrolyzed and mediates the covalent binding of the protein to the proteinase.</text>
</comment>
<comment type="subunit">
    <text>Homotetramer, which consists of two pairs of disulfide-linked chains.</text>
</comment>
<comment type="subcellular location">
    <subcellularLocation>
        <location>Secreted</location>
    </subcellularLocation>
</comment>
<comment type="alternative products">
    <event type="alternative splicing"/>
    <isoform>
        <id>P20742-1</id>
        <name>1</name>
        <sequence type="displayed"/>
    </isoform>
    <isoform>
        <id>P20742-2</id>
        <name>2</name>
        <sequence type="described" ref="VSP_030862 VSP_030863 VSP_030864"/>
    </isoform>
</comment>
<comment type="tissue specificity">
    <text>Plasma. Prominent constituent of late-pregnancy sera.</text>
</comment>
<comment type="similarity">
    <text evidence="9">Belongs to the protease inhibitor I39 (alpha-2-macroglobulin) family.</text>
</comment>